<keyword id="KW-0378">Hydrolase</keyword>
<keyword id="KW-1185">Reference proteome</keyword>
<keyword id="KW-0719">Serine esterase</keyword>
<sequence>MSGLHKQFLKKIKEQERAFGLSSLSEDPDESESNSNYFSPTPQPPNELRTDINEERHGHIRETYNDTKRDVFPIADIYTDPRSGVRFQTYFKPPSSSNAPIFICHHGAGSSSMTFCKLAQSLDNEYGKNNEYPGLFTYDMRGHGDSSTTIPPDYSLATITNDCEFIIDEFHAKHALRSSIYLLGHSLGGSVLTSYLVANPDNAYKFKGLIVLDIVEETAIKALSAMPQFVRKRPTTFGDYQEAIDWHIKESHLLHSEESALVSVPDLLRECPNGLIWKTNLQETEPFWETWFTGLSENFINCGKTQHIAKLLVLSGHETLDTNLIIGQMQGKYQLIVFNNTQNTGHFIQEDIPTQISISLVDFVRRNDSPNEYMKKEFGFVPKWGGKIHD</sequence>
<gene>
    <name type="primary">PPE1</name>
    <name type="ordered locus">DEHA2A01562g</name>
</gene>
<evidence type="ECO:0000250" key="1"/>
<evidence type="ECO:0000255" key="2"/>
<evidence type="ECO:0000256" key="3">
    <source>
        <dbReference type="SAM" id="MobiDB-lite"/>
    </source>
</evidence>
<evidence type="ECO:0000305" key="4"/>
<proteinExistence type="inferred from homology"/>
<dbReference type="EC" id="3.1.1.89"/>
<dbReference type="EMBL" id="CR382133">
    <property type="protein sequence ID" value="CAG84358.2"/>
    <property type="molecule type" value="Genomic_DNA"/>
</dbReference>
<dbReference type="RefSeq" id="XP_456406.2">
    <property type="nucleotide sequence ID" value="XM_456406.1"/>
</dbReference>
<dbReference type="SMR" id="Q6BZG3"/>
<dbReference type="FunCoup" id="Q6BZG3">
    <property type="interactions" value="867"/>
</dbReference>
<dbReference type="STRING" id="284592.Q6BZG3"/>
<dbReference type="ESTHER" id="debha-ppme1">
    <property type="family name" value="PPase_methylesterase_euk"/>
</dbReference>
<dbReference type="GeneID" id="2899326"/>
<dbReference type="KEGG" id="dha:DEHA2A01562g"/>
<dbReference type="VEuPathDB" id="FungiDB:DEHA2A01562g"/>
<dbReference type="eggNOG" id="KOG2564">
    <property type="taxonomic scope" value="Eukaryota"/>
</dbReference>
<dbReference type="HOGENOM" id="CLU_024818_3_1_1"/>
<dbReference type="InParanoid" id="Q6BZG3"/>
<dbReference type="OMA" id="VMVCHHG"/>
<dbReference type="OrthoDB" id="194865at2759"/>
<dbReference type="Proteomes" id="UP000000599">
    <property type="component" value="Chromosome A"/>
</dbReference>
<dbReference type="GO" id="GO:0005763">
    <property type="term" value="C:mitochondrial small ribosomal subunit"/>
    <property type="evidence" value="ECO:0007669"/>
    <property type="project" value="EnsemblFungi"/>
</dbReference>
<dbReference type="GO" id="GO:0051722">
    <property type="term" value="F:protein C-terminal methylesterase activity"/>
    <property type="evidence" value="ECO:0007669"/>
    <property type="project" value="UniProtKB-EC"/>
</dbReference>
<dbReference type="Gene3D" id="3.40.50.1820">
    <property type="entry name" value="alpha/beta hydrolase"/>
    <property type="match status" value="1"/>
</dbReference>
<dbReference type="InterPro" id="IPR000073">
    <property type="entry name" value="AB_hydrolase_1"/>
</dbReference>
<dbReference type="InterPro" id="IPR029058">
    <property type="entry name" value="AB_hydrolase_fold"/>
</dbReference>
<dbReference type="InterPro" id="IPR016812">
    <property type="entry name" value="PPase_methylesterase_euk"/>
</dbReference>
<dbReference type="PANTHER" id="PTHR14189:SF0">
    <property type="entry name" value="PROTEIN PHOSPHATASE METHYLESTERASE 1"/>
    <property type="match status" value="1"/>
</dbReference>
<dbReference type="PANTHER" id="PTHR14189">
    <property type="entry name" value="PROTEIN PHOSPHATASE METHYLESTERASE-1 RELATED"/>
    <property type="match status" value="1"/>
</dbReference>
<dbReference type="Pfam" id="PF00561">
    <property type="entry name" value="Abhydrolase_1"/>
    <property type="match status" value="1"/>
</dbReference>
<dbReference type="PIRSF" id="PIRSF022950">
    <property type="entry name" value="PPase_methylesterase_euk"/>
    <property type="match status" value="1"/>
</dbReference>
<dbReference type="SUPFAM" id="SSF53474">
    <property type="entry name" value="alpha/beta-Hydrolases"/>
    <property type="match status" value="1"/>
</dbReference>
<protein>
    <recommendedName>
        <fullName>Protein phosphatase methylesterase 1</fullName>
        <shortName>PME-1</shortName>
        <ecNumber>3.1.1.89</ecNumber>
    </recommendedName>
</protein>
<name>PPME1_DEBHA</name>
<feature type="chain" id="PRO_0000223664" description="Protein phosphatase methylesterase 1">
    <location>
        <begin position="1"/>
        <end position="390"/>
    </location>
</feature>
<feature type="domain" description="AB hydrolase-1" evidence="2">
    <location>
        <begin position="100"/>
        <end position="332"/>
    </location>
</feature>
<feature type="region of interest" description="Disordered" evidence="3">
    <location>
        <begin position="19"/>
        <end position="50"/>
    </location>
</feature>
<feature type="active site" evidence="1">
    <location>
        <position position="186"/>
    </location>
</feature>
<feature type="active site" evidence="1">
    <location>
        <position position="213"/>
    </location>
</feature>
<feature type="active site" evidence="1">
    <location>
        <position position="346"/>
    </location>
</feature>
<comment type="function">
    <text evidence="1">Demethylates proteins that have been reversibly carboxymethylated. Demethylates the phosphatase PP2A catalytic subunit (By similarity).</text>
</comment>
<comment type="catalytic activity">
    <reaction>
        <text>[phosphatase 2A protein]-C-terminal L-leucine methyl ester + H2O = [phosphatase 2A protein]-C-terminal L-leucine + methanol + H(+)</text>
        <dbReference type="Rhea" id="RHEA:48548"/>
        <dbReference type="Rhea" id="RHEA-COMP:12134"/>
        <dbReference type="Rhea" id="RHEA-COMP:12135"/>
        <dbReference type="ChEBI" id="CHEBI:15377"/>
        <dbReference type="ChEBI" id="CHEBI:15378"/>
        <dbReference type="ChEBI" id="CHEBI:17790"/>
        <dbReference type="ChEBI" id="CHEBI:90516"/>
        <dbReference type="ChEBI" id="CHEBI:90517"/>
        <dbReference type="EC" id="3.1.1.89"/>
    </reaction>
</comment>
<comment type="similarity">
    <text evidence="4">Belongs to the AB hydrolase superfamily.</text>
</comment>
<reference key="1">
    <citation type="journal article" date="2004" name="Nature">
        <title>Genome evolution in yeasts.</title>
        <authorList>
            <person name="Dujon B."/>
            <person name="Sherman D."/>
            <person name="Fischer G."/>
            <person name="Durrens P."/>
            <person name="Casaregola S."/>
            <person name="Lafontaine I."/>
            <person name="de Montigny J."/>
            <person name="Marck C."/>
            <person name="Neuveglise C."/>
            <person name="Talla E."/>
            <person name="Goffard N."/>
            <person name="Frangeul L."/>
            <person name="Aigle M."/>
            <person name="Anthouard V."/>
            <person name="Babour A."/>
            <person name="Barbe V."/>
            <person name="Barnay S."/>
            <person name="Blanchin S."/>
            <person name="Beckerich J.-M."/>
            <person name="Beyne E."/>
            <person name="Bleykasten C."/>
            <person name="Boisrame A."/>
            <person name="Boyer J."/>
            <person name="Cattolico L."/>
            <person name="Confanioleri F."/>
            <person name="de Daruvar A."/>
            <person name="Despons L."/>
            <person name="Fabre E."/>
            <person name="Fairhead C."/>
            <person name="Ferry-Dumazet H."/>
            <person name="Groppi A."/>
            <person name="Hantraye F."/>
            <person name="Hennequin C."/>
            <person name="Jauniaux N."/>
            <person name="Joyet P."/>
            <person name="Kachouri R."/>
            <person name="Kerrest A."/>
            <person name="Koszul R."/>
            <person name="Lemaire M."/>
            <person name="Lesur I."/>
            <person name="Ma L."/>
            <person name="Muller H."/>
            <person name="Nicaud J.-M."/>
            <person name="Nikolski M."/>
            <person name="Oztas S."/>
            <person name="Ozier-Kalogeropoulos O."/>
            <person name="Pellenz S."/>
            <person name="Potier S."/>
            <person name="Richard G.-F."/>
            <person name="Straub M.-L."/>
            <person name="Suleau A."/>
            <person name="Swennen D."/>
            <person name="Tekaia F."/>
            <person name="Wesolowski-Louvel M."/>
            <person name="Westhof E."/>
            <person name="Wirth B."/>
            <person name="Zeniou-Meyer M."/>
            <person name="Zivanovic Y."/>
            <person name="Bolotin-Fukuhara M."/>
            <person name="Thierry A."/>
            <person name="Bouchier C."/>
            <person name="Caudron B."/>
            <person name="Scarpelli C."/>
            <person name="Gaillardin C."/>
            <person name="Weissenbach J."/>
            <person name="Wincker P."/>
            <person name="Souciet J.-L."/>
        </authorList>
    </citation>
    <scope>NUCLEOTIDE SEQUENCE [LARGE SCALE GENOMIC DNA]</scope>
    <source>
        <strain>ATCC 36239 / CBS 767 / BCRC 21394 / JCM 1990 / NBRC 0083 / IGC 2968</strain>
    </source>
</reference>
<organism>
    <name type="scientific">Debaryomyces hansenii (strain ATCC 36239 / CBS 767 / BCRC 21394 / JCM 1990 / NBRC 0083 / IGC 2968)</name>
    <name type="common">Yeast</name>
    <name type="synonym">Torulaspora hansenii</name>
    <dbReference type="NCBI Taxonomy" id="284592"/>
    <lineage>
        <taxon>Eukaryota</taxon>
        <taxon>Fungi</taxon>
        <taxon>Dikarya</taxon>
        <taxon>Ascomycota</taxon>
        <taxon>Saccharomycotina</taxon>
        <taxon>Pichiomycetes</taxon>
        <taxon>Debaryomycetaceae</taxon>
        <taxon>Debaryomyces</taxon>
    </lineage>
</organism>
<accession>Q6BZG3</accession>